<geneLocation type="chloroplast"/>
<accession>Q8HVJ6</accession>
<dbReference type="EC" id="7.1.1.-" evidence="1"/>
<dbReference type="EMBL" id="AF383867">
    <property type="protein sequence ID" value="AAN61808.1"/>
    <property type="molecule type" value="Genomic_DNA"/>
</dbReference>
<dbReference type="SMR" id="Q8HVJ6"/>
<dbReference type="GO" id="GO:0009535">
    <property type="term" value="C:chloroplast thylakoid membrane"/>
    <property type="evidence" value="ECO:0007669"/>
    <property type="project" value="UniProtKB-SubCell"/>
</dbReference>
<dbReference type="GO" id="GO:0051539">
    <property type="term" value="F:4 iron, 4 sulfur cluster binding"/>
    <property type="evidence" value="ECO:0007669"/>
    <property type="project" value="UniProtKB-KW"/>
</dbReference>
<dbReference type="GO" id="GO:0005506">
    <property type="term" value="F:iron ion binding"/>
    <property type="evidence" value="ECO:0007669"/>
    <property type="project" value="UniProtKB-UniRule"/>
</dbReference>
<dbReference type="GO" id="GO:0008137">
    <property type="term" value="F:NADH dehydrogenase (ubiquinone) activity"/>
    <property type="evidence" value="ECO:0007669"/>
    <property type="project" value="InterPro"/>
</dbReference>
<dbReference type="GO" id="GO:0048038">
    <property type="term" value="F:quinone binding"/>
    <property type="evidence" value="ECO:0007669"/>
    <property type="project" value="UniProtKB-KW"/>
</dbReference>
<dbReference type="GO" id="GO:0019684">
    <property type="term" value="P:photosynthesis, light reaction"/>
    <property type="evidence" value="ECO:0007669"/>
    <property type="project" value="UniProtKB-UniRule"/>
</dbReference>
<dbReference type="FunFam" id="3.30.70.3270:FF:000006">
    <property type="entry name" value="NAD(P)H-quinone oxidoreductase subunit I, chloroplastic"/>
    <property type="match status" value="1"/>
</dbReference>
<dbReference type="Gene3D" id="3.30.70.3270">
    <property type="match status" value="1"/>
</dbReference>
<dbReference type="HAMAP" id="MF_01351">
    <property type="entry name" value="NDH1_NuoI"/>
    <property type="match status" value="1"/>
</dbReference>
<dbReference type="InterPro" id="IPR017896">
    <property type="entry name" value="4Fe4S_Fe-S-bd"/>
</dbReference>
<dbReference type="InterPro" id="IPR017900">
    <property type="entry name" value="4Fe4S_Fe_S_CS"/>
</dbReference>
<dbReference type="InterPro" id="IPR010226">
    <property type="entry name" value="NADH_quinone_OxRdtase_chainI"/>
</dbReference>
<dbReference type="InterPro" id="IPR004497">
    <property type="entry name" value="NDHI"/>
</dbReference>
<dbReference type="NCBIfam" id="TIGR00403">
    <property type="entry name" value="ndhI"/>
    <property type="match status" value="1"/>
</dbReference>
<dbReference type="NCBIfam" id="TIGR01971">
    <property type="entry name" value="NuoI"/>
    <property type="match status" value="1"/>
</dbReference>
<dbReference type="NCBIfam" id="NF004537">
    <property type="entry name" value="PRK05888.1-3"/>
    <property type="match status" value="1"/>
</dbReference>
<dbReference type="PANTHER" id="PTHR47275">
    <property type="entry name" value="NAD(P)H-QUINONE OXIDOREDUCTASE SUBUNIT I, CHLOROPLASTIC"/>
    <property type="match status" value="1"/>
</dbReference>
<dbReference type="PANTHER" id="PTHR47275:SF1">
    <property type="entry name" value="NAD(P)H-QUINONE OXIDOREDUCTASE SUBUNIT I, CHLOROPLASTIC"/>
    <property type="match status" value="1"/>
</dbReference>
<dbReference type="Pfam" id="PF00037">
    <property type="entry name" value="Fer4"/>
    <property type="match status" value="2"/>
</dbReference>
<dbReference type="SUPFAM" id="SSF54862">
    <property type="entry name" value="4Fe-4S ferredoxins"/>
    <property type="match status" value="1"/>
</dbReference>
<dbReference type="PROSITE" id="PS00198">
    <property type="entry name" value="4FE4S_FER_1"/>
    <property type="match status" value="2"/>
</dbReference>
<dbReference type="PROSITE" id="PS51379">
    <property type="entry name" value="4FE4S_FER_2"/>
    <property type="match status" value="2"/>
</dbReference>
<name>NDHI_VERJA</name>
<gene>
    <name evidence="1" type="primary">ndhI</name>
</gene>
<sequence>MFPMVTEFMNYGQQTVRAARYIGQGFMITLSHANRLPVTIQYPYEKLITSERFRGRIHFEFDKCIACEVCVRVCPIDLPVVDWKLETDIRKKRLLNYSIDFGICIFCGNCVEYCPTNCLSMTEEYELSTYDRHELNYNQIALGRLPMSIIDDYTIRTILNLPEIKT</sequence>
<evidence type="ECO:0000255" key="1">
    <source>
        <dbReference type="HAMAP-Rule" id="MF_01351"/>
    </source>
</evidence>
<reference key="1">
    <citation type="submission" date="2003-01" db="EMBL/GenBank/DDBJ databases">
        <title>Chloroplast DNA phylogeny of tribe Heliantheae (Asteraceae).</title>
        <authorList>
            <person name="Panero J.L."/>
            <person name="Baldwin B.G."/>
            <person name="Schilling E.E."/>
            <person name="Clevinger J.A."/>
        </authorList>
    </citation>
    <scope>NUCLEOTIDE SEQUENCE [GENOMIC DNA]</scope>
</reference>
<organism>
    <name type="scientific">Verbesina jacksonii</name>
    <dbReference type="NCBI Taxonomy" id="217846"/>
    <lineage>
        <taxon>Eukaryota</taxon>
        <taxon>Viridiplantae</taxon>
        <taxon>Streptophyta</taxon>
        <taxon>Embryophyta</taxon>
        <taxon>Tracheophyta</taxon>
        <taxon>Spermatophyta</taxon>
        <taxon>Magnoliopsida</taxon>
        <taxon>eudicotyledons</taxon>
        <taxon>Gunneridae</taxon>
        <taxon>Pentapetalae</taxon>
        <taxon>asterids</taxon>
        <taxon>campanulids</taxon>
        <taxon>Asterales</taxon>
        <taxon>Asteraceae</taxon>
        <taxon>Asteroideae</taxon>
        <taxon>Heliantheae alliance</taxon>
        <taxon>Heliantheae</taxon>
        <taxon>Verbesina</taxon>
    </lineage>
</organism>
<protein>
    <recommendedName>
        <fullName evidence="1">NAD(P)H-quinone oxidoreductase subunit I, chloroplastic</fullName>
        <ecNumber evidence="1">7.1.1.-</ecNumber>
    </recommendedName>
    <alternativeName>
        <fullName evidence="1">NAD(P)H dehydrogenase subunit I</fullName>
        <shortName evidence="1">NDH subunit I</shortName>
    </alternativeName>
    <alternativeName>
        <fullName evidence="1">NADH-plastoquinone oxidoreductase subunit I</fullName>
    </alternativeName>
</protein>
<keyword id="KW-0004">4Fe-4S</keyword>
<keyword id="KW-0150">Chloroplast</keyword>
<keyword id="KW-0408">Iron</keyword>
<keyword id="KW-0411">Iron-sulfur</keyword>
<keyword id="KW-0472">Membrane</keyword>
<keyword id="KW-0479">Metal-binding</keyword>
<keyword id="KW-0520">NAD</keyword>
<keyword id="KW-0521">NADP</keyword>
<keyword id="KW-0934">Plastid</keyword>
<keyword id="KW-0618">Plastoquinone</keyword>
<keyword id="KW-0874">Quinone</keyword>
<keyword id="KW-0677">Repeat</keyword>
<keyword id="KW-0793">Thylakoid</keyword>
<keyword id="KW-1278">Translocase</keyword>
<feature type="chain" id="PRO_0000250864" description="NAD(P)H-quinone oxidoreductase subunit I, chloroplastic">
    <location>
        <begin position="1"/>
        <end position="166"/>
    </location>
</feature>
<feature type="domain" description="4Fe-4S ferredoxin-type 1" evidence="1">
    <location>
        <begin position="55"/>
        <end position="84"/>
    </location>
</feature>
<feature type="domain" description="4Fe-4S ferredoxin-type 2" evidence="1">
    <location>
        <begin position="95"/>
        <end position="124"/>
    </location>
</feature>
<feature type="binding site" evidence="1">
    <location>
        <position position="64"/>
    </location>
    <ligand>
        <name>[4Fe-4S] cluster</name>
        <dbReference type="ChEBI" id="CHEBI:49883"/>
        <label>1</label>
    </ligand>
</feature>
<feature type="binding site" evidence="1">
    <location>
        <position position="67"/>
    </location>
    <ligand>
        <name>[4Fe-4S] cluster</name>
        <dbReference type="ChEBI" id="CHEBI:49883"/>
        <label>1</label>
    </ligand>
</feature>
<feature type="binding site" evidence="1">
    <location>
        <position position="70"/>
    </location>
    <ligand>
        <name>[4Fe-4S] cluster</name>
        <dbReference type="ChEBI" id="CHEBI:49883"/>
        <label>1</label>
    </ligand>
</feature>
<feature type="binding site" evidence="1">
    <location>
        <position position="74"/>
    </location>
    <ligand>
        <name>[4Fe-4S] cluster</name>
        <dbReference type="ChEBI" id="CHEBI:49883"/>
        <label>2</label>
    </ligand>
</feature>
<feature type="binding site" evidence="1">
    <location>
        <position position="104"/>
    </location>
    <ligand>
        <name>[4Fe-4S] cluster</name>
        <dbReference type="ChEBI" id="CHEBI:49883"/>
        <label>2</label>
    </ligand>
</feature>
<feature type="binding site" evidence="1">
    <location>
        <position position="107"/>
    </location>
    <ligand>
        <name>[4Fe-4S] cluster</name>
        <dbReference type="ChEBI" id="CHEBI:49883"/>
        <label>2</label>
    </ligand>
</feature>
<feature type="binding site" evidence="1">
    <location>
        <position position="110"/>
    </location>
    <ligand>
        <name>[4Fe-4S] cluster</name>
        <dbReference type="ChEBI" id="CHEBI:49883"/>
        <label>2</label>
    </ligand>
</feature>
<feature type="binding site" evidence="1">
    <location>
        <position position="114"/>
    </location>
    <ligand>
        <name>[4Fe-4S] cluster</name>
        <dbReference type="ChEBI" id="CHEBI:49883"/>
        <label>1</label>
    </ligand>
</feature>
<proteinExistence type="inferred from homology"/>
<comment type="function">
    <text evidence="1">NDH shuttles electrons from NAD(P)H:plastoquinone, via FMN and iron-sulfur (Fe-S) centers, to quinones in the photosynthetic chain and possibly in a chloroplast respiratory chain. The immediate electron acceptor for the enzyme in this species is believed to be plastoquinone. Couples the redox reaction to proton translocation, and thus conserves the redox energy in a proton gradient.</text>
</comment>
<comment type="catalytic activity">
    <reaction evidence="1">
        <text>a plastoquinone + NADH + (n+1) H(+)(in) = a plastoquinol + NAD(+) + n H(+)(out)</text>
        <dbReference type="Rhea" id="RHEA:42608"/>
        <dbReference type="Rhea" id="RHEA-COMP:9561"/>
        <dbReference type="Rhea" id="RHEA-COMP:9562"/>
        <dbReference type="ChEBI" id="CHEBI:15378"/>
        <dbReference type="ChEBI" id="CHEBI:17757"/>
        <dbReference type="ChEBI" id="CHEBI:57540"/>
        <dbReference type="ChEBI" id="CHEBI:57945"/>
        <dbReference type="ChEBI" id="CHEBI:62192"/>
    </reaction>
</comment>
<comment type="catalytic activity">
    <reaction evidence="1">
        <text>a plastoquinone + NADPH + (n+1) H(+)(in) = a plastoquinol + NADP(+) + n H(+)(out)</text>
        <dbReference type="Rhea" id="RHEA:42612"/>
        <dbReference type="Rhea" id="RHEA-COMP:9561"/>
        <dbReference type="Rhea" id="RHEA-COMP:9562"/>
        <dbReference type="ChEBI" id="CHEBI:15378"/>
        <dbReference type="ChEBI" id="CHEBI:17757"/>
        <dbReference type="ChEBI" id="CHEBI:57783"/>
        <dbReference type="ChEBI" id="CHEBI:58349"/>
        <dbReference type="ChEBI" id="CHEBI:62192"/>
    </reaction>
</comment>
<comment type="cofactor">
    <cofactor evidence="1">
        <name>[4Fe-4S] cluster</name>
        <dbReference type="ChEBI" id="CHEBI:49883"/>
    </cofactor>
    <text evidence="1">Binds 2 [4Fe-4S] clusters per subunit.</text>
</comment>
<comment type="subunit">
    <text evidence="1">NDH is composed of at least 16 different subunits, 5 of which are encoded in the nucleus.</text>
</comment>
<comment type="subcellular location">
    <subcellularLocation>
        <location evidence="1">Plastid</location>
        <location evidence="1">Chloroplast thylakoid membrane</location>
        <topology evidence="1">Peripheral membrane protein</topology>
    </subcellularLocation>
</comment>
<comment type="similarity">
    <text evidence="1">Belongs to the complex I 23 kDa subunit family.</text>
</comment>